<dbReference type="EMBL" id="U30821">
    <property type="protein sequence ID" value="AAA81179.1"/>
    <property type="molecule type" value="Genomic_DNA"/>
</dbReference>
<dbReference type="PIR" id="T06836">
    <property type="entry name" value="T06836"/>
</dbReference>
<dbReference type="RefSeq" id="NP_043148.1">
    <property type="nucleotide sequence ID" value="NC_001675.1"/>
</dbReference>
<dbReference type="SMR" id="P48138"/>
<dbReference type="GeneID" id="801660"/>
<dbReference type="GO" id="GO:0009842">
    <property type="term" value="C:cyanelle"/>
    <property type="evidence" value="ECO:0007669"/>
    <property type="project" value="UniProtKB-SubCell"/>
</dbReference>
<dbReference type="GO" id="GO:0015935">
    <property type="term" value="C:small ribosomal subunit"/>
    <property type="evidence" value="ECO:0007669"/>
    <property type="project" value="TreeGrafter"/>
</dbReference>
<dbReference type="GO" id="GO:0019843">
    <property type="term" value="F:rRNA binding"/>
    <property type="evidence" value="ECO:0007669"/>
    <property type="project" value="UniProtKB-KW"/>
</dbReference>
<dbReference type="GO" id="GO:0003735">
    <property type="term" value="F:structural constituent of ribosome"/>
    <property type="evidence" value="ECO:0007669"/>
    <property type="project" value="InterPro"/>
</dbReference>
<dbReference type="GO" id="GO:0006412">
    <property type="term" value="P:translation"/>
    <property type="evidence" value="ECO:0007669"/>
    <property type="project" value="InterPro"/>
</dbReference>
<dbReference type="FunFam" id="1.10.287.1480:FF:000001">
    <property type="entry name" value="30S ribosomal protein S14"/>
    <property type="match status" value="1"/>
</dbReference>
<dbReference type="Gene3D" id="1.10.287.1480">
    <property type="match status" value="1"/>
</dbReference>
<dbReference type="HAMAP" id="MF_00537">
    <property type="entry name" value="Ribosomal_uS14_1"/>
    <property type="match status" value="1"/>
</dbReference>
<dbReference type="InterPro" id="IPR001209">
    <property type="entry name" value="Ribosomal_uS14"/>
</dbReference>
<dbReference type="InterPro" id="IPR023036">
    <property type="entry name" value="Ribosomal_uS14_bac/plastid"/>
</dbReference>
<dbReference type="InterPro" id="IPR018271">
    <property type="entry name" value="Ribosomal_uS14_CS"/>
</dbReference>
<dbReference type="NCBIfam" id="NF006477">
    <property type="entry name" value="PRK08881.1"/>
    <property type="match status" value="1"/>
</dbReference>
<dbReference type="PANTHER" id="PTHR19836">
    <property type="entry name" value="30S RIBOSOMAL PROTEIN S14"/>
    <property type="match status" value="1"/>
</dbReference>
<dbReference type="PANTHER" id="PTHR19836:SF19">
    <property type="entry name" value="SMALL RIBOSOMAL SUBUNIT PROTEIN US14M"/>
    <property type="match status" value="1"/>
</dbReference>
<dbReference type="Pfam" id="PF00253">
    <property type="entry name" value="Ribosomal_S14"/>
    <property type="match status" value="1"/>
</dbReference>
<dbReference type="SUPFAM" id="SSF57716">
    <property type="entry name" value="Glucocorticoid receptor-like (DNA-binding domain)"/>
    <property type="match status" value="1"/>
</dbReference>
<dbReference type="PROSITE" id="PS00527">
    <property type="entry name" value="RIBOSOMAL_S14"/>
    <property type="match status" value="1"/>
</dbReference>
<geneLocation type="cyanelle"/>
<evidence type="ECO:0000255" key="1">
    <source>
        <dbReference type="HAMAP-Rule" id="MF_00537"/>
    </source>
</evidence>
<evidence type="ECO:0000305" key="2"/>
<name>RR14_CYAPA</name>
<reference key="1">
    <citation type="journal article" date="1995" name="Plant Mol. Biol. Rep.">
        <title>Nucleotide sequence of the cyanelle DNA from Cyanophora paradoxa.</title>
        <authorList>
            <person name="Stirewalt V.L."/>
            <person name="Michalowski C.B."/>
            <person name="Loeffelhardt W."/>
            <person name="Bohnert H.J."/>
            <person name="Bryant D.A."/>
        </authorList>
    </citation>
    <scope>NUCLEOTIDE SEQUENCE [LARGE SCALE GENOMIC DNA]</scope>
    <source>
        <strain>UTEX LB 555 / Pringsheim</strain>
    </source>
</reference>
<reference key="2">
    <citation type="book" date="1997" name="Eukaryotism and symbiosis">
        <title>The complete sequence of the cyanelle genome of Cyanophora paradoxa: the genetic complexity of a primitive plastid.</title>
        <editorList>
            <person name="Schenk H.E.A."/>
            <person name="Herrmann R."/>
            <person name="Jeon K.W."/>
            <person name="Mueller N.E."/>
            <person name="Schwemmler W."/>
        </editorList>
        <authorList>
            <person name="Loeffelhardt W."/>
            <person name="Stirewalt V.L."/>
            <person name="Michalowski C.B."/>
            <person name="Annarella M."/>
            <person name="Farley J.Y."/>
            <person name="Schluchter W.M."/>
            <person name="Chung S."/>
            <person name="Newmann-Spallart C."/>
            <person name="Steiner J.M."/>
            <person name="Jakowitsch J."/>
            <person name="Bohnert H.J."/>
            <person name="Bryant D.A."/>
        </authorList>
    </citation>
    <scope>NUCLEOTIDE SEQUENCE [LARGE SCALE GENOMIC DNA]</scope>
    <source>
        <strain>UTEX LB 555 / Pringsheim</strain>
    </source>
</reference>
<feature type="chain" id="PRO_0000130963" description="Small ribosomal subunit protein uS14c">
    <location>
        <begin position="1"/>
        <end position="100"/>
    </location>
</feature>
<gene>
    <name evidence="1" type="primary">rps14</name>
</gene>
<keyword id="KW-0194">Cyanelle</keyword>
<keyword id="KW-0934">Plastid</keyword>
<keyword id="KW-0687">Ribonucleoprotein</keyword>
<keyword id="KW-0689">Ribosomal protein</keyword>
<keyword id="KW-0694">RNA-binding</keyword>
<keyword id="KW-0699">rRNA-binding</keyword>
<organism>
    <name type="scientific">Cyanophora paradoxa</name>
    <dbReference type="NCBI Taxonomy" id="2762"/>
    <lineage>
        <taxon>Eukaryota</taxon>
        <taxon>Glaucocystophyceae</taxon>
        <taxon>Cyanophoraceae</taxon>
        <taxon>Cyanophora</taxon>
    </lineage>
</organism>
<proteinExistence type="inferred from homology"/>
<protein>
    <recommendedName>
        <fullName evidence="2">Small ribosomal subunit protein uS14c</fullName>
    </recommendedName>
    <alternativeName>
        <fullName>Cyanelle 30S ribosomal protein S14</fullName>
    </alternativeName>
</protein>
<accession>P48138</accession>
<comment type="function">
    <text evidence="1">Binds 16S rRNA, required for the assembly of 30S particles.</text>
</comment>
<comment type="subunit">
    <text evidence="1">Part of the 30S ribosomal subunit.</text>
</comment>
<comment type="subcellular location">
    <subcellularLocation>
        <location>Plastid</location>
        <location>Cyanelle</location>
    </subcellularLocation>
</comment>
<comment type="similarity">
    <text evidence="1">Belongs to the universal ribosomal protein uS14 family.</text>
</comment>
<sequence length="100" mass="11846">MAKKSMIERDKKRENLMNKYLVKRQQLKTRLNETDSVEEKLLLNQELQKLPRNSAPSRVRIRCWLTGRPRGNYRDFGVSRHVLREMAHQGLLPGVTKSSW</sequence>